<sequence length="355" mass="37712">MGAMGVNFLAGDIGGTKTILALVTINESSPGLARPVTLFEQTYSSPAFPDLVPMVQQFRQEAAFVLGNPISVAKACFAIAGPVIDNTCRLTNLDWHLSGDRLAQELAIAQVDLINDFAAVGYGILGLGSEDLTVLQAAPVDPSGAIAILGAGTGLGQCYVIPQGQGRYRVFASEGAHGDFAPRSPLEWQLLEYLKKKYSLGRISIERVVSGMGIAMIYEFLRHQYPERESAQFSKLYQTWNREKDQETKTVDLAAAVSQAALEGTDVLADQAMELFLGAYGAEAGNLALKLLPRGGLYVAGGIAPKIIPLLEKGSFMQGFSDKGRMQSLMGTIPVQVVLNAKVGLIGAAVCAAQS</sequence>
<reference key="1">
    <citation type="journal article" date="1995" name="DNA Res.">
        <title>Sequence analysis of the genome of the unicellular cyanobacterium Synechocystis sp. strain PCC6803. I. Sequence features in the 1 Mb region from map positions 64% to 92% of the genome.</title>
        <authorList>
            <person name="Kaneko T."/>
            <person name="Tanaka A."/>
            <person name="Sato S."/>
            <person name="Kotani H."/>
            <person name="Sazuka T."/>
            <person name="Miyajima N."/>
            <person name="Sugiura M."/>
            <person name="Tabata S."/>
        </authorList>
    </citation>
    <scope>NUCLEOTIDE SEQUENCE [LARGE SCALE GENOMIC DNA]</scope>
    <source>
        <strain>ATCC 27184 / PCC 6803 / N-1</strain>
    </source>
</reference>
<reference key="2">
    <citation type="journal article" date="1996" name="DNA Res.">
        <title>Sequence analysis of the genome of the unicellular cyanobacterium Synechocystis sp. strain PCC6803. II. Sequence determination of the entire genome and assignment of potential protein-coding regions.</title>
        <authorList>
            <person name="Kaneko T."/>
            <person name="Sato S."/>
            <person name="Kotani H."/>
            <person name="Tanaka A."/>
            <person name="Asamizu E."/>
            <person name="Nakamura Y."/>
            <person name="Miyajima N."/>
            <person name="Hirosawa M."/>
            <person name="Sugiura M."/>
            <person name="Sasamoto S."/>
            <person name="Kimura T."/>
            <person name="Hosouchi T."/>
            <person name="Matsuno A."/>
            <person name="Muraki A."/>
            <person name="Nakazaki N."/>
            <person name="Naruo K."/>
            <person name="Okumura S."/>
            <person name="Shimpo S."/>
            <person name="Takeuchi C."/>
            <person name="Wada T."/>
            <person name="Watanabe A."/>
            <person name="Yamada M."/>
            <person name="Yasuda M."/>
            <person name="Tabata S."/>
        </authorList>
    </citation>
    <scope>NUCLEOTIDE SEQUENCE [LARGE SCALE GENOMIC DNA]</scope>
    <source>
        <strain>ATCC 27184 / PCC 6803 / Kazusa</strain>
    </source>
</reference>
<gene>
    <name evidence="1" type="primary">glk</name>
    <name type="ordered locus">sll0593</name>
</gene>
<protein>
    <recommendedName>
        <fullName evidence="1">Glucokinase</fullName>
        <ecNumber evidence="1">2.7.1.2</ecNumber>
    </recommendedName>
    <alternativeName>
        <fullName evidence="1">Glucose kinase</fullName>
    </alternativeName>
</protein>
<proteinExistence type="inferred from homology"/>
<evidence type="ECO:0000255" key="1">
    <source>
        <dbReference type="HAMAP-Rule" id="MF_00524"/>
    </source>
</evidence>
<comment type="catalytic activity">
    <reaction evidence="1">
        <text>D-glucose + ATP = D-glucose 6-phosphate + ADP + H(+)</text>
        <dbReference type="Rhea" id="RHEA:17825"/>
        <dbReference type="ChEBI" id="CHEBI:4167"/>
        <dbReference type="ChEBI" id="CHEBI:15378"/>
        <dbReference type="ChEBI" id="CHEBI:30616"/>
        <dbReference type="ChEBI" id="CHEBI:61548"/>
        <dbReference type="ChEBI" id="CHEBI:456216"/>
        <dbReference type="EC" id="2.7.1.2"/>
    </reaction>
</comment>
<comment type="subcellular location">
    <subcellularLocation>
        <location evidence="1">Cytoplasm</location>
    </subcellularLocation>
</comment>
<comment type="similarity">
    <text evidence="1">Belongs to the bacterial glucokinase family.</text>
</comment>
<name>GLK_SYNY3</name>
<keyword id="KW-0067">ATP-binding</keyword>
<keyword id="KW-0963">Cytoplasm</keyword>
<keyword id="KW-0324">Glycolysis</keyword>
<keyword id="KW-0418">Kinase</keyword>
<keyword id="KW-0547">Nucleotide-binding</keyword>
<keyword id="KW-1185">Reference proteome</keyword>
<keyword id="KW-0808">Transferase</keyword>
<organism>
    <name type="scientific">Synechocystis sp. (strain ATCC 27184 / PCC 6803 / Kazusa)</name>
    <dbReference type="NCBI Taxonomy" id="1111708"/>
    <lineage>
        <taxon>Bacteria</taxon>
        <taxon>Bacillati</taxon>
        <taxon>Cyanobacteriota</taxon>
        <taxon>Cyanophyceae</taxon>
        <taxon>Synechococcales</taxon>
        <taxon>Merismopediaceae</taxon>
        <taxon>Synechocystis</taxon>
    </lineage>
</organism>
<accession>Q55855</accession>
<feature type="chain" id="PRO_0000215140" description="Glucokinase">
    <location>
        <begin position="1"/>
        <end position="355"/>
    </location>
</feature>
<feature type="binding site" evidence="1">
    <location>
        <begin position="11"/>
        <end position="16"/>
    </location>
    <ligand>
        <name>ATP</name>
        <dbReference type="ChEBI" id="CHEBI:30616"/>
    </ligand>
</feature>
<dbReference type="EC" id="2.7.1.2" evidence="1"/>
<dbReference type="EMBL" id="BA000022">
    <property type="protein sequence ID" value="BAA10611.1"/>
    <property type="molecule type" value="Genomic_DNA"/>
</dbReference>
<dbReference type="PIR" id="S76667">
    <property type="entry name" value="S76667"/>
</dbReference>
<dbReference type="SMR" id="Q55855"/>
<dbReference type="IntAct" id="Q55855">
    <property type="interactions" value="4"/>
</dbReference>
<dbReference type="STRING" id="1148.gene:10500115"/>
<dbReference type="PaxDb" id="1148-1001773"/>
<dbReference type="EnsemblBacteria" id="BAA10611">
    <property type="protein sequence ID" value="BAA10611"/>
    <property type="gene ID" value="BAA10611"/>
</dbReference>
<dbReference type="KEGG" id="syn:sll0593"/>
<dbReference type="eggNOG" id="COG0837">
    <property type="taxonomic scope" value="Bacteria"/>
</dbReference>
<dbReference type="InParanoid" id="Q55855"/>
<dbReference type="PhylomeDB" id="Q55855"/>
<dbReference type="Proteomes" id="UP000001425">
    <property type="component" value="Chromosome"/>
</dbReference>
<dbReference type="GO" id="GO:0005737">
    <property type="term" value="C:cytoplasm"/>
    <property type="evidence" value="ECO:0007669"/>
    <property type="project" value="UniProtKB-SubCell"/>
</dbReference>
<dbReference type="GO" id="GO:0005524">
    <property type="term" value="F:ATP binding"/>
    <property type="evidence" value="ECO:0007669"/>
    <property type="project" value="UniProtKB-UniRule"/>
</dbReference>
<dbReference type="GO" id="GO:0005536">
    <property type="term" value="F:D-glucose binding"/>
    <property type="evidence" value="ECO:0007669"/>
    <property type="project" value="InterPro"/>
</dbReference>
<dbReference type="GO" id="GO:0004340">
    <property type="term" value="F:glucokinase activity"/>
    <property type="evidence" value="ECO:0007669"/>
    <property type="project" value="UniProtKB-UniRule"/>
</dbReference>
<dbReference type="GO" id="GO:0006096">
    <property type="term" value="P:glycolytic process"/>
    <property type="evidence" value="ECO:0007669"/>
    <property type="project" value="UniProtKB-UniRule"/>
</dbReference>
<dbReference type="CDD" id="cd24008">
    <property type="entry name" value="ASKHA_NBD_GLK"/>
    <property type="match status" value="1"/>
</dbReference>
<dbReference type="Gene3D" id="3.30.420.40">
    <property type="match status" value="1"/>
</dbReference>
<dbReference type="Gene3D" id="3.40.367.20">
    <property type="match status" value="1"/>
</dbReference>
<dbReference type="HAMAP" id="MF_00524">
    <property type="entry name" value="Glucokinase"/>
    <property type="match status" value="1"/>
</dbReference>
<dbReference type="InterPro" id="IPR043129">
    <property type="entry name" value="ATPase_NBD"/>
</dbReference>
<dbReference type="InterPro" id="IPR003836">
    <property type="entry name" value="Glucokinase"/>
</dbReference>
<dbReference type="NCBIfam" id="TIGR00749">
    <property type="entry name" value="glk"/>
    <property type="match status" value="1"/>
</dbReference>
<dbReference type="NCBIfam" id="NF001415">
    <property type="entry name" value="PRK00292.1-2"/>
    <property type="match status" value="1"/>
</dbReference>
<dbReference type="PANTHER" id="PTHR47363">
    <property type="entry name" value="GLUCOKINASE"/>
    <property type="match status" value="1"/>
</dbReference>
<dbReference type="PANTHER" id="PTHR47363:SF1">
    <property type="entry name" value="GLUCOKINASE"/>
    <property type="match status" value="1"/>
</dbReference>
<dbReference type="Pfam" id="PF02685">
    <property type="entry name" value="Glucokinase"/>
    <property type="match status" value="1"/>
</dbReference>
<dbReference type="SUPFAM" id="SSF53067">
    <property type="entry name" value="Actin-like ATPase domain"/>
    <property type="match status" value="1"/>
</dbReference>